<comment type="function">
    <text>Catalyzes the two-stage endonucleolytic cleavage to 3'-phosphomononucleotides and 3'-phosphooligonucleotides with 2',3'-cyclic phosphate intermediates.</text>
</comment>
<comment type="subcellular location">
    <subcellularLocation>
        <location evidence="1">Cytoplasm</location>
    </subcellularLocation>
</comment>
<comment type="similarity">
    <text evidence="2">Belongs to the BetVI family.</text>
</comment>
<name>RNS2_PANGI</name>
<dbReference type="EC" id="3.1.-.-"/>
<dbReference type="SMR" id="P80890"/>
<dbReference type="Allergome" id="10131">
    <property type="allergen name" value="Pan g 1"/>
</dbReference>
<dbReference type="GO" id="GO:0005737">
    <property type="term" value="C:cytoplasm"/>
    <property type="evidence" value="ECO:0007669"/>
    <property type="project" value="UniProtKB-SubCell"/>
</dbReference>
<dbReference type="GO" id="GO:0005634">
    <property type="term" value="C:nucleus"/>
    <property type="evidence" value="ECO:0007669"/>
    <property type="project" value="TreeGrafter"/>
</dbReference>
<dbReference type="GO" id="GO:0010427">
    <property type="term" value="F:abscisic acid binding"/>
    <property type="evidence" value="ECO:0007669"/>
    <property type="project" value="InterPro"/>
</dbReference>
<dbReference type="GO" id="GO:0004519">
    <property type="term" value="F:endonuclease activity"/>
    <property type="evidence" value="ECO:0007669"/>
    <property type="project" value="UniProtKB-KW"/>
</dbReference>
<dbReference type="GO" id="GO:0004864">
    <property type="term" value="F:protein phosphatase inhibitor activity"/>
    <property type="evidence" value="ECO:0007669"/>
    <property type="project" value="InterPro"/>
</dbReference>
<dbReference type="GO" id="GO:0038023">
    <property type="term" value="F:signaling receptor activity"/>
    <property type="evidence" value="ECO:0007669"/>
    <property type="project" value="InterPro"/>
</dbReference>
<dbReference type="GO" id="GO:0009738">
    <property type="term" value="P:abscisic acid-activated signaling pathway"/>
    <property type="evidence" value="ECO:0007669"/>
    <property type="project" value="InterPro"/>
</dbReference>
<dbReference type="GO" id="GO:0006952">
    <property type="term" value="P:defense response"/>
    <property type="evidence" value="ECO:0007669"/>
    <property type="project" value="UniProtKB-KW"/>
</dbReference>
<dbReference type="CDD" id="cd07816">
    <property type="entry name" value="Bet_v1-like"/>
    <property type="match status" value="1"/>
</dbReference>
<dbReference type="FunFam" id="3.30.530.20:FF:000007">
    <property type="entry name" value="Major pollen allergen Bet v 1-A"/>
    <property type="match status" value="1"/>
</dbReference>
<dbReference type="Gene3D" id="3.30.530.20">
    <property type="match status" value="1"/>
</dbReference>
<dbReference type="InterPro" id="IPR000916">
    <property type="entry name" value="Bet_v_I/MLP"/>
</dbReference>
<dbReference type="InterPro" id="IPR024949">
    <property type="entry name" value="Bet_v_I_allergen"/>
</dbReference>
<dbReference type="InterPro" id="IPR050279">
    <property type="entry name" value="Plant_def-hormone_signal"/>
</dbReference>
<dbReference type="InterPro" id="IPR023393">
    <property type="entry name" value="START-like_dom_sf"/>
</dbReference>
<dbReference type="PANTHER" id="PTHR31213">
    <property type="entry name" value="OS08G0374000 PROTEIN-RELATED"/>
    <property type="match status" value="1"/>
</dbReference>
<dbReference type="PANTHER" id="PTHR31213:SF55">
    <property type="entry name" value="STRESS-INDUCED PROTEIN SAM22"/>
    <property type="match status" value="1"/>
</dbReference>
<dbReference type="Pfam" id="PF00407">
    <property type="entry name" value="Bet_v_1"/>
    <property type="match status" value="1"/>
</dbReference>
<dbReference type="PRINTS" id="PR00634">
    <property type="entry name" value="BETALLERGEN"/>
</dbReference>
<dbReference type="SMART" id="SM01037">
    <property type="entry name" value="Bet_v_1"/>
    <property type="match status" value="1"/>
</dbReference>
<dbReference type="SUPFAM" id="SSF55961">
    <property type="entry name" value="Bet v1-like"/>
    <property type="match status" value="1"/>
</dbReference>
<dbReference type="PROSITE" id="PS00451">
    <property type="entry name" value="PATHOGENESIS_BETVI"/>
    <property type="match status" value="1"/>
</dbReference>
<feature type="chain" id="PRO_0000154156" description="Ribonuclease 2">
    <location>
        <begin position="1"/>
        <end position="153"/>
    </location>
</feature>
<feature type="sequence conflict" description="In Ref. 2; AA sequence." evidence="2" ref="2">
    <original>K</original>
    <variation>I</variation>
    <location>
        <position position="20"/>
    </location>
</feature>
<proteinExistence type="evidence at protein level"/>
<evidence type="ECO:0000250" key="1"/>
<evidence type="ECO:0000305" key="2"/>
<accession>P80890</accession>
<sequence>GVQKTETQAISPVPAEKLFKGSFLDMDTVVPKAFPEGIKSVQVLEGNGGVGTIKNVTLGDATPFNTMKTRIDAIDEHAFTYTYTIIGGDILLDIIESIENHFKIVPTDGGSTITQTTIYNTIGDAVIPEENIKDATDKSIQLFKAVEAYLLAN</sequence>
<organism>
    <name type="scientific">Panax ginseng</name>
    <name type="common">Korean ginseng</name>
    <dbReference type="NCBI Taxonomy" id="4054"/>
    <lineage>
        <taxon>Eukaryota</taxon>
        <taxon>Viridiplantae</taxon>
        <taxon>Streptophyta</taxon>
        <taxon>Embryophyta</taxon>
        <taxon>Tracheophyta</taxon>
        <taxon>Spermatophyta</taxon>
        <taxon>Magnoliopsida</taxon>
        <taxon>eudicotyledons</taxon>
        <taxon>Gunneridae</taxon>
        <taxon>Pentapetalae</taxon>
        <taxon>asterids</taxon>
        <taxon>campanulids</taxon>
        <taxon>Apiales</taxon>
        <taxon>Araliaceae</taxon>
        <taxon>Panax</taxon>
    </lineage>
</organism>
<reference key="1">
    <citation type="journal article" date="1997" name="FEBS Lett.">
        <title>Primary structures of two ribonucleases from ginseng calluses. New members of the PR-10 family of intracellular pathogenesis-related plant proteins.</title>
        <authorList>
            <person name="Moiseyev G.P."/>
            <person name="Fedoreyeva L.I."/>
            <person name="Zhuravlev Y.N."/>
            <person name="Yasnetskaya E.G."/>
            <person name="Jekel P.A."/>
            <person name="Beintema J.J."/>
        </authorList>
    </citation>
    <scope>PROTEIN SEQUENCE</scope>
    <source>
        <strain>cv. R1</strain>
        <tissue>Callus</tissue>
    </source>
</reference>
<reference key="2">
    <citation type="journal article" date="2002" name="Proteomics">
        <title>Proteome of oriental ginseng Panax ginseng C. A. Meyer and the potential to use it as an identification tool.</title>
        <authorList>
            <person name="Lum J.H.-K."/>
            <person name="Fung K.-L."/>
            <person name="Cheung P.-Y."/>
            <person name="Wong M.-S."/>
            <person name="Lee C.-H."/>
            <person name="Kwok F.S.-L."/>
            <person name="Leung M.C.-P."/>
            <person name="Hui P.-K."/>
            <person name="Lo S.C.-L."/>
        </authorList>
    </citation>
    <scope>PROTEIN SEQUENCE OF 2-21</scope>
    <source>
        <tissue>Root</tissue>
    </source>
</reference>
<protein>
    <recommendedName>
        <fullName>Ribonuclease 2</fullName>
        <ecNumber>3.1.-.-</ecNumber>
    </recommendedName>
</protein>
<keyword id="KW-0963">Cytoplasm</keyword>
<keyword id="KW-0903">Direct protein sequencing</keyword>
<keyword id="KW-0255">Endonuclease</keyword>
<keyword id="KW-0378">Hydrolase</keyword>
<keyword id="KW-0540">Nuclease</keyword>
<keyword id="KW-0568">Pathogenesis-related protein</keyword>
<keyword id="KW-0611">Plant defense</keyword>